<protein>
    <recommendedName>
        <fullName evidence="1">Holliday junction branch migration complex subunit RuvB</fullName>
        <ecNumber evidence="1">3.6.4.-</ecNumber>
    </recommendedName>
</protein>
<proteinExistence type="inferred from homology"/>
<gene>
    <name evidence="1" type="primary">ruvB</name>
    <name type="ordered locus">lmo1532</name>
</gene>
<accession>Q8Y6Z8</accession>
<name>RUVB_LISMO</name>
<organism>
    <name type="scientific">Listeria monocytogenes serovar 1/2a (strain ATCC BAA-679 / EGD-e)</name>
    <dbReference type="NCBI Taxonomy" id="169963"/>
    <lineage>
        <taxon>Bacteria</taxon>
        <taxon>Bacillati</taxon>
        <taxon>Bacillota</taxon>
        <taxon>Bacilli</taxon>
        <taxon>Bacillales</taxon>
        <taxon>Listeriaceae</taxon>
        <taxon>Listeria</taxon>
    </lineage>
</organism>
<keyword id="KW-0067">ATP-binding</keyword>
<keyword id="KW-0963">Cytoplasm</keyword>
<keyword id="KW-0227">DNA damage</keyword>
<keyword id="KW-0233">DNA recombination</keyword>
<keyword id="KW-0234">DNA repair</keyword>
<keyword id="KW-0238">DNA-binding</keyword>
<keyword id="KW-0378">Hydrolase</keyword>
<keyword id="KW-0547">Nucleotide-binding</keyword>
<keyword id="KW-1185">Reference proteome</keyword>
<evidence type="ECO:0000255" key="1">
    <source>
        <dbReference type="HAMAP-Rule" id="MF_00016"/>
    </source>
</evidence>
<feature type="chain" id="PRO_0000165553" description="Holliday junction branch migration complex subunit RuvB">
    <location>
        <begin position="1"/>
        <end position="335"/>
    </location>
</feature>
<feature type="region of interest" description="Large ATPase domain (RuvB-L)" evidence="1">
    <location>
        <begin position="1"/>
        <end position="183"/>
    </location>
</feature>
<feature type="region of interest" description="Small ATPAse domain (RuvB-S)" evidence="1">
    <location>
        <begin position="184"/>
        <end position="254"/>
    </location>
</feature>
<feature type="region of interest" description="Head domain (RuvB-H)" evidence="1">
    <location>
        <begin position="257"/>
        <end position="335"/>
    </location>
</feature>
<feature type="binding site" evidence="1">
    <location>
        <position position="22"/>
    </location>
    <ligand>
        <name>ATP</name>
        <dbReference type="ChEBI" id="CHEBI:30616"/>
    </ligand>
</feature>
<feature type="binding site" evidence="1">
    <location>
        <position position="23"/>
    </location>
    <ligand>
        <name>ATP</name>
        <dbReference type="ChEBI" id="CHEBI:30616"/>
    </ligand>
</feature>
<feature type="binding site" evidence="1">
    <location>
        <position position="64"/>
    </location>
    <ligand>
        <name>ATP</name>
        <dbReference type="ChEBI" id="CHEBI:30616"/>
    </ligand>
</feature>
<feature type="binding site" evidence="1">
    <location>
        <position position="67"/>
    </location>
    <ligand>
        <name>ATP</name>
        <dbReference type="ChEBI" id="CHEBI:30616"/>
    </ligand>
</feature>
<feature type="binding site" evidence="1">
    <location>
        <position position="68"/>
    </location>
    <ligand>
        <name>ATP</name>
        <dbReference type="ChEBI" id="CHEBI:30616"/>
    </ligand>
</feature>
<feature type="binding site" evidence="1">
    <location>
        <position position="68"/>
    </location>
    <ligand>
        <name>Mg(2+)</name>
        <dbReference type="ChEBI" id="CHEBI:18420"/>
    </ligand>
</feature>
<feature type="binding site" evidence="1">
    <location>
        <position position="69"/>
    </location>
    <ligand>
        <name>ATP</name>
        <dbReference type="ChEBI" id="CHEBI:30616"/>
    </ligand>
</feature>
<feature type="binding site" evidence="1">
    <location>
        <begin position="130"/>
        <end position="132"/>
    </location>
    <ligand>
        <name>ATP</name>
        <dbReference type="ChEBI" id="CHEBI:30616"/>
    </ligand>
</feature>
<feature type="binding site" evidence="1">
    <location>
        <position position="173"/>
    </location>
    <ligand>
        <name>ATP</name>
        <dbReference type="ChEBI" id="CHEBI:30616"/>
    </ligand>
</feature>
<feature type="binding site" evidence="1">
    <location>
        <position position="183"/>
    </location>
    <ligand>
        <name>ATP</name>
        <dbReference type="ChEBI" id="CHEBI:30616"/>
    </ligand>
</feature>
<feature type="binding site" evidence="1">
    <location>
        <position position="220"/>
    </location>
    <ligand>
        <name>ATP</name>
        <dbReference type="ChEBI" id="CHEBI:30616"/>
    </ligand>
</feature>
<feature type="binding site" evidence="1">
    <location>
        <position position="293"/>
    </location>
    <ligand>
        <name>DNA</name>
        <dbReference type="ChEBI" id="CHEBI:16991"/>
    </ligand>
</feature>
<feature type="binding site" evidence="1">
    <location>
        <position position="312"/>
    </location>
    <ligand>
        <name>DNA</name>
        <dbReference type="ChEBI" id="CHEBI:16991"/>
    </ligand>
</feature>
<feature type="binding site" evidence="1">
    <location>
        <position position="317"/>
    </location>
    <ligand>
        <name>DNA</name>
        <dbReference type="ChEBI" id="CHEBI:16991"/>
    </ligand>
</feature>
<dbReference type="EC" id="3.6.4.-" evidence="1"/>
<dbReference type="EMBL" id="AL591979">
    <property type="protein sequence ID" value="CAC99610.1"/>
    <property type="molecule type" value="Genomic_DNA"/>
</dbReference>
<dbReference type="PIR" id="AD1266">
    <property type="entry name" value="AD1266"/>
</dbReference>
<dbReference type="RefSeq" id="NP_465057.1">
    <property type="nucleotide sequence ID" value="NC_003210.1"/>
</dbReference>
<dbReference type="RefSeq" id="WP_003723536.1">
    <property type="nucleotide sequence ID" value="NZ_CP149495.1"/>
</dbReference>
<dbReference type="SMR" id="Q8Y6Z8"/>
<dbReference type="STRING" id="169963.gene:17594189"/>
<dbReference type="PaxDb" id="169963-lmo1532"/>
<dbReference type="EnsemblBacteria" id="CAC99610">
    <property type="protein sequence ID" value="CAC99610"/>
    <property type="gene ID" value="CAC99610"/>
</dbReference>
<dbReference type="GeneID" id="987802"/>
<dbReference type="KEGG" id="lmo:lmo1532"/>
<dbReference type="PATRIC" id="fig|169963.11.peg.1573"/>
<dbReference type="eggNOG" id="COG2255">
    <property type="taxonomic scope" value="Bacteria"/>
</dbReference>
<dbReference type="HOGENOM" id="CLU_055599_1_0_9"/>
<dbReference type="OrthoDB" id="9804478at2"/>
<dbReference type="PhylomeDB" id="Q8Y6Z8"/>
<dbReference type="BioCyc" id="LMON169963:LMO1532-MONOMER"/>
<dbReference type="Proteomes" id="UP000000817">
    <property type="component" value="Chromosome"/>
</dbReference>
<dbReference type="GO" id="GO:0005737">
    <property type="term" value="C:cytoplasm"/>
    <property type="evidence" value="ECO:0007669"/>
    <property type="project" value="UniProtKB-SubCell"/>
</dbReference>
<dbReference type="GO" id="GO:0048476">
    <property type="term" value="C:Holliday junction resolvase complex"/>
    <property type="evidence" value="ECO:0007669"/>
    <property type="project" value="UniProtKB-UniRule"/>
</dbReference>
<dbReference type="GO" id="GO:0005524">
    <property type="term" value="F:ATP binding"/>
    <property type="evidence" value="ECO:0007669"/>
    <property type="project" value="UniProtKB-UniRule"/>
</dbReference>
<dbReference type="GO" id="GO:0016887">
    <property type="term" value="F:ATP hydrolysis activity"/>
    <property type="evidence" value="ECO:0007669"/>
    <property type="project" value="InterPro"/>
</dbReference>
<dbReference type="GO" id="GO:0000400">
    <property type="term" value="F:four-way junction DNA binding"/>
    <property type="evidence" value="ECO:0007669"/>
    <property type="project" value="UniProtKB-UniRule"/>
</dbReference>
<dbReference type="GO" id="GO:0009378">
    <property type="term" value="F:four-way junction helicase activity"/>
    <property type="evidence" value="ECO:0007669"/>
    <property type="project" value="InterPro"/>
</dbReference>
<dbReference type="GO" id="GO:0006310">
    <property type="term" value="P:DNA recombination"/>
    <property type="evidence" value="ECO:0007669"/>
    <property type="project" value="UniProtKB-UniRule"/>
</dbReference>
<dbReference type="GO" id="GO:0006281">
    <property type="term" value="P:DNA repair"/>
    <property type="evidence" value="ECO:0007669"/>
    <property type="project" value="UniProtKB-UniRule"/>
</dbReference>
<dbReference type="CDD" id="cd00009">
    <property type="entry name" value="AAA"/>
    <property type="match status" value="1"/>
</dbReference>
<dbReference type="Gene3D" id="1.10.8.60">
    <property type="match status" value="1"/>
</dbReference>
<dbReference type="Gene3D" id="3.40.50.300">
    <property type="entry name" value="P-loop containing nucleotide triphosphate hydrolases"/>
    <property type="match status" value="1"/>
</dbReference>
<dbReference type="Gene3D" id="1.10.10.10">
    <property type="entry name" value="Winged helix-like DNA-binding domain superfamily/Winged helix DNA-binding domain"/>
    <property type="match status" value="1"/>
</dbReference>
<dbReference type="HAMAP" id="MF_00016">
    <property type="entry name" value="DNA_HJ_migration_RuvB"/>
    <property type="match status" value="1"/>
</dbReference>
<dbReference type="InterPro" id="IPR003593">
    <property type="entry name" value="AAA+_ATPase"/>
</dbReference>
<dbReference type="InterPro" id="IPR041445">
    <property type="entry name" value="AAA_lid_4"/>
</dbReference>
<dbReference type="InterPro" id="IPR004605">
    <property type="entry name" value="DNA_helicase_Holl-junc_RuvB"/>
</dbReference>
<dbReference type="InterPro" id="IPR027417">
    <property type="entry name" value="P-loop_NTPase"/>
</dbReference>
<dbReference type="InterPro" id="IPR008824">
    <property type="entry name" value="RuvB-like_N"/>
</dbReference>
<dbReference type="InterPro" id="IPR008823">
    <property type="entry name" value="RuvB_C"/>
</dbReference>
<dbReference type="InterPro" id="IPR036388">
    <property type="entry name" value="WH-like_DNA-bd_sf"/>
</dbReference>
<dbReference type="InterPro" id="IPR036390">
    <property type="entry name" value="WH_DNA-bd_sf"/>
</dbReference>
<dbReference type="NCBIfam" id="NF000868">
    <property type="entry name" value="PRK00080.1"/>
    <property type="match status" value="1"/>
</dbReference>
<dbReference type="NCBIfam" id="TIGR00635">
    <property type="entry name" value="ruvB"/>
    <property type="match status" value="1"/>
</dbReference>
<dbReference type="PANTHER" id="PTHR42848">
    <property type="match status" value="1"/>
</dbReference>
<dbReference type="PANTHER" id="PTHR42848:SF1">
    <property type="entry name" value="HOLLIDAY JUNCTION BRANCH MIGRATION COMPLEX SUBUNIT RUVB"/>
    <property type="match status" value="1"/>
</dbReference>
<dbReference type="Pfam" id="PF17864">
    <property type="entry name" value="AAA_lid_4"/>
    <property type="match status" value="1"/>
</dbReference>
<dbReference type="Pfam" id="PF05491">
    <property type="entry name" value="RuvB_C"/>
    <property type="match status" value="1"/>
</dbReference>
<dbReference type="Pfam" id="PF05496">
    <property type="entry name" value="RuvB_N"/>
    <property type="match status" value="1"/>
</dbReference>
<dbReference type="SMART" id="SM00382">
    <property type="entry name" value="AAA"/>
    <property type="match status" value="1"/>
</dbReference>
<dbReference type="SUPFAM" id="SSF52540">
    <property type="entry name" value="P-loop containing nucleoside triphosphate hydrolases"/>
    <property type="match status" value="1"/>
</dbReference>
<dbReference type="SUPFAM" id="SSF46785">
    <property type="entry name" value="Winged helix' DNA-binding domain"/>
    <property type="match status" value="1"/>
</dbReference>
<reference key="1">
    <citation type="journal article" date="2001" name="Science">
        <title>Comparative genomics of Listeria species.</title>
        <authorList>
            <person name="Glaser P."/>
            <person name="Frangeul L."/>
            <person name="Buchrieser C."/>
            <person name="Rusniok C."/>
            <person name="Amend A."/>
            <person name="Baquero F."/>
            <person name="Berche P."/>
            <person name="Bloecker H."/>
            <person name="Brandt P."/>
            <person name="Chakraborty T."/>
            <person name="Charbit A."/>
            <person name="Chetouani F."/>
            <person name="Couve E."/>
            <person name="de Daruvar A."/>
            <person name="Dehoux P."/>
            <person name="Domann E."/>
            <person name="Dominguez-Bernal G."/>
            <person name="Duchaud E."/>
            <person name="Durant L."/>
            <person name="Dussurget O."/>
            <person name="Entian K.-D."/>
            <person name="Fsihi H."/>
            <person name="Garcia-del Portillo F."/>
            <person name="Garrido P."/>
            <person name="Gautier L."/>
            <person name="Goebel W."/>
            <person name="Gomez-Lopez N."/>
            <person name="Hain T."/>
            <person name="Hauf J."/>
            <person name="Jackson D."/>
            <person name="Jones L.-M."/>
            <person name="Kaerst U."/>
            <person name="Kreft J."/>
            <person name="Kuhn M."/>
            <person name="Kunst F."/>
            <person name="Kurapkat G."/>
            <person name="Madueno E."/>
            <person name="Maitournam A."/>
            <person name="Mata Vicente J."/>
            <person name="Ng E."/>
            <person name="Nedjari H."/>
            <person name="Nordsiek G."/>
            <person name="Novella S."/>
            <person name="de Pablos B."/>
            <person name="Perez-Diaz J.-C."/>
            <person name="Purcell R."/>
            <person name="Remmel B."/>
            <person name="Rose M."/>
            <person name="Schlueter T."/>
            <person name="Simoes N."/>
            <person name="Tierrez A."/>
            <person name="Vazquez-Boland J.-A."/>
            <person name="Voss H."/>
            <person name="Wehland J."/>
            <person name="Cossart P."/>
        </authorList>
    </citation>
    <scope>NUCLEOTIDE SEQUENCE [LARGE SCALE GENOMIC DNA]</scope>
    <source>
        <strain>ATCC BAA-679 / EGD-e</strain>
    </source>
</reference>
<sequence>MDERIISSETVDAEEVSFETSLRPQNLSQYIGQDKVKNNLTVFIEAATLRNEALDHVLLYGPPGLGKTTLAMVIASEMGSQIKTTSGPAIERPGDLATILTSLEPGDVLFIDEIHRLSRAIEEILYPAMEDYCLDIVIGTGPTARSVRLDLPPFTLIGATTRAGLLSAPLRDRFGVIDHLEFYTEEQLTEIVLRTSNILDTKIDDLGAREIARRSRGTPRIANRLLKRVRDFAQVRGNGTVTEKLAKEALTLLQVDPRGLDTIDQKLLHTIIQSFRGGPVGLDTIAASIGEERETIEDMQEPYLLQIGFLQRTPRGRIVTETAYNHLGISYEKEV</sequence>
<comment type="function">
    <text evidence="1">The RuvA-RuvB-RuvC complex processes Holliday junction (HJ) DNA during genetic recombination and DNA repair, while the RuvA-RuvB complex plays an important role in the rescue of blocked DNA replication forks via replication fork reversal (RFR). RuvA specifically binds to HJ cruciform DNA, conferring on it an open structure. The RuvB hexamer acts as an ATP-dependent pump, pulling dsDNA into and through the RuvAB complex. RuvB forms 2 homohexamers on either side of HJ DNA bound by 1 or 2 RuvA tetramers; 4 subunits per hexamer contact DNA at a time. Coordinated motions by a converter formed by DNA-disengaged RuvB subunits stimulates ATP hydrolysis and nucleotide exchange. Immobilization of the converter enables RuvB to convert the ATP-contained energy into a lever motion, pulling 2 nucleotides of DNA out of the RuvA tetramer per ATP hydrolyzed, thus driving DNA branch migration. The RuvB motors rotate together with the DNA substrate, which together with the progressing nucleotide cycle form the mechanistic basis for DNA recombination by continuous HJ branch migration. Branch migration allows RuvC to scan DNA until it finds its consensus sequence, where it cleaves and resolves cruciform DNA.</text>
</comment>
<comment type="catalytic activity">
    <reaction evidence="1">
        <text>ATP + H2O = ADP + phosphate + H(+)</text>
        <dbReference type="Rhea" id="RHEA:13065"/>
        <dbReference type="ChEBI" id="CHEBI:15377"/>
        <dbReference type="ChEBI" id="CHEBI:15378"/>
        <dbReference type="ChEBI" id="CHEBI:30616"/>
        <dbReference type="ChEBI" id="CHEBI:43474"/>
        <dbReference type="ChEBI" id="CHEBI:456216"/>
    </reaction>
</comment>
<comment type="subunit">
    <text evidence="1">Homohexamer. Forms an RuvA(8)-RuvB(12)-Holliday junction (HJ) complex. HJ DNA is sandwiched between 2 RuvA tetramers; dsDNA enters through RuvA and exits via RuvB. An RuvB hexamer assembles on each DNA strand where it exits the tetramer. Each RuvB hexamer is contacted by two RuvA subunits (via domain III) on 2 adjacent RuvB subunits; this complex drives branch migration. In the full resolvosome a probable DNA-RuvA(4)-RuvB(12)-RuvC(2) complex forms which resolves the HJ.</text>
</comment>
<comment type="subcellular location">
    <subcellularLocation>
        <location evidence="1">Cytoplasm</location>
    </subcellularLocation>
</comment>
<comment type="domain">
    <text evidence="1">Has 3 domains, the large (RuvB-L) and small ATPase (RuvB-S) domains and the C-terminal head (RuvB-H) domain. The head domain binds DNA, while the ATPase domains jointly bind ATP, ADP or are empty depending on the state of the subunit in the translocation cycle. During a single DNA translocation step the structure of each domain remains the same, but their relative positions change.</text>
</comment>
<comment type="similarity">
    <text evidence="1">Belongs to the RuvB family.</text>
</comment>